<protein>
    <recommendedName>
        <fullName evidence="1">4-diphosphocytidyl-2-C-methyl-D-erythritol kinase</fullName>
        <shortName evidence="1">CMK</shortName>
        <ecNumber evidence="1">2.7.1.148</ecNumber>
    </recommendedName>
    <alternativeName>
        <fullName evidence="1">4-(cytidine-5'-diphospho)-2-C-methyl-D-erythritol kinase</fullName>
    </alternativeName>
</protein>
<comment type="function">
    <text evidence="1">Catalyzes the phosphorylation of the position 2 hydroxy group of 4-diphosphocytidyl-2C-methyl-D-erythritol.</text>
</comment>
<comment type="catalytic activity">
    <reaction evidence="1">
        <text>4-CDP-2-C-methyl-D-erythritol + ATP = 4-CDP-2-C-methyl-D-erythritol 2-phosphate + ADP + H(+)</text>
        <dbReference type="Rhea" id="RHEA:18437"/>
        <dbReference type="ChEBI" id="CHEBI:15378"/>
        <dbReference type="ChEBI" id="CHEBI:30616"/>
        <dbReference type="ChEBI" id="CHEBI:57823"/>
        <dbReference type="ChEBI" id="CHEBI:57919"/>
        <dbReference type="ChEBI" id="CHEBI:456216"/>
        <dbReference type="EC" id="2.7.1.148"/>
    </reaction>
</comment>
<comment type="pathway">
    <text evidence="1">Isoprenoid biosynthesis; isopentenyl diphosphate biosynthesis via DXP pathway; isopentenyl diphosphate from 1-deoxy-D-xylulose 5-phosphate: step 3/6.</text>
</comment>
<comment type="similarity">
    <text evidence="1">Belongs to the GHMP kinase family. IspE subfamily.</text>
</comment>
<organism>
    <name type="scientific">Chloroherpeton thalassium (strain ATCC 35110 / GB-78)</name>
    <dbReference type="NCBI Taxonomy" id="517418"/>
    <lineage>
        <taxon>Bacteria</taxon>
        <taxon>Pseudomonadati</taxon>
        <taxon>Chlorobiota</taxon>
        <taxon>Chlorobiia</taxon>
        <taxon>Chlorobiales</taxon>
        <taxon>Chloroherpetonaceae</taxon>
        <taxon>Chloroherpeton</taxon>
    </lineage>
</organism>
<dbReference type="EC" id="2.7.1.148" evidence="1"/>
<dbReference type="EMBL" id="CP001100">
    <property type="protein sequence ID" value="ACF13190.1"/>
    <property type="molecule type" value="Genomic_DNA"/>
</dbReference>
<dbReference type="RefSeq" id="WP_012499274.1">
    <property type="nucleotide sequence ID" value="NC_011026.1"/>
</dbReference>
<dbReference type="SMR" id="B3QW77"/>
<dbReference type="STRING" id="517418.Ctha_0721"/>
<dbReference type="KEGG" id="cts:Ctha_0721"/>
<dbReference type="eggNOG" id="COG1947">
    <property type="taxonomic scope" value="Bacteria"/>
</dbReference>
<dbReference type="HOGENOM" id="CLU_053057_3_0_10"/>
<dbReference type="OrthoDB" id="9809438at2"/>
<dbReference type="UniPathway" id="UPA00056">
    <property type="reaction ID" value="UER00094"/>
</dbReference>
<dbReference type="Proteomes" id="UP000001208">
    <property type="component" value="Chromosome"/>
</dbReference>
<dbReference type="GO" id="GO:0050515">
    <property type="term" value="F:4-(cytidine 5'-diphospho)-2-C-methyl-D-erythritol kinase activity"/>
    <property type="evidence" value="ECO:0007669"/>
    <property type="project" value="UniProtKB-UniRule"/>
</dbReference>
<dbReference type="GO" id="GO:0005524">
    <property type="term" value="F:ATP binding"/>
    <property type="evidence" value="ECO:0007669"/>
    <property type="project" value="UniProtKB-UniRule"/>
</dbReference>
<dbReference type="GO" id="GO:0019288">
    <property type="term" value="P:isopentenyl diphosphate biosynthetic process, methylerythritol 4-phosphate pathway"/>
    <property type="evidence" value="ECO:0007669"/>
    <property type="project" value="UniProtKB-UniRule"/>
</dbReference>
<dbReference type="GO" id="GO:0016114">
    <property type="term" value="P:terpenoid biosynthetic process"/>
    <property type="evidence" value="ECO:0007669"/>
    <property type="project" value="InterPro"/>
</dbReference>
<dbReference type="Gene3D" id="3.30.230.10">
    <property type="match status" value="1"/>
</dbReference>
<dbReference type="Gene3D" id="3.30.70.890">
    <property type="entry name" value="GHMP kinase, C-terminal domain"/>
    <property type="match status" value="1"/>
</dbReference>
<dbReference type="HAMAP" id="MF_00061">
    <property type="entry name" value="IspE"/>
    <property type="match status" value="1"/>
</dbReference>
<dbReference type="InterPro" id="IPR013750">
    <property type="entry name" value="GHMP_kinase_C_dom"/>
</dbReference>
<dbReference type="InterPro" id="IPR036554">
    <property type="entry name" value="GHMP_kinase_C_sf"/>
</dbReference>
<dbReference type="InterPro" id="IPR006204">
    <property type="entry name" value="GHMP_kinase_N_dom"/>
</dbReference>
<dbReference type="InterPro" id="IPR004424">
    <property type="entry name" value="IspE"/>
</dbReference>
<dbReference type="InterPro" id="IPR020568">
    <property type="entry name" value="Ribosomal_Su5_D2-typ_SF"/>
</dbReference>
<dbReference type="InterPro" id="IPR014721">
    <property type="entry name" value="Ribsml_uS5_D2-typ_fold_subgr"/>
</dbReference>
<dbReference type="NCBIfam" id="TIGR00154">
    <property type="entry name" value="ispE"/>
    <property type="match status" value="1"/>
</dbReference>
<dbReference type="PANTHER" id="PTHR43527">
    <property type="entry name" value="4-DIPHOSPHOCYTIDYL-2-C-METHYL-D-ERYTHRITOL KINASE, CHLOROPLASTIC"/>
    <property type="match status" value="1"/>
</dbReference>
<dbReference type="PANTHER" id="PTHR43527:SF2">
    <property type="entry name" value="4-DIPHOSPHOCYTIDYL-2-C-METHYL-D-ERYTHRITOL KINASE, CHLOROPLASTIC"/>
    <property type="match status" value="1"/>
</dbReference>
<dbReference type="Pfam" id="PF08544">
    <property type="entry name" value="GHMP_kinases_C"/>
    <property type="match status" value="1"/>
</dbReference>
<dbReference type="Pfam" id="PF00288">
    <property type="entry name" value="GHMP_kinases_N"/>
    <property type="match status" value="1"/>
</dbReference>
<dbReference type="PIRSF" id="PIRSF010376">
    <property type="entry name" value="IspE"/>
    <property type="match status" value="1"/>
</dbReference>
<dbReference type="SUPFAM" id="SSF55060">
    <property type="entry name" value="GHMP Kinase, C-terminal domain"/>
    <property type="match status" value="1"/>
</dbReference>
<dbReference type="SUPFAM" id="SSF54211">
    <property type="entry name" value="Ribosomal protein S5 domain 2-like"/>
    <property type="match status" value="1"/>
</dbReference>
<evidence type="ECO:0000255" key="1">
    <source>
        <dbReference type="HAMAP-Rule" id="MF_00061"/>
    </source>
</evidence>
<gene>
    <name evidence="1" type="primary">ispE</name>
    <name type="ordered locus">Ctha_0721</name>
</gene>
<keyword id="KW-0067">ATP-binding</keyword>
<keyword id="KW-0414">Isoprene biosynthesis</keyword>
<keyword id="KW-0418">Kinase</keyword>
<keyword id="KW-0547">Nucleotide-binding</keyword>
<keyword id="KW-1185">Reference proteome</keyword>
<keyword id="KW-0808">Transferase</keyword>
<accession>B3QW77</accession>
<proteinExistence type="inferred from homology"/>
<reference key="1">
    <citation type="submission" date="2008-06" db="EMBL/GenBank/DDBJ databases">
        <title>Complete sequence of Chloroherpeton thalassium ATCC 35110.</title>
        <authorList>
            <consortium name="US DOE Joint Genome Institute"/>
            <person name="Lucas S."/>
            <person name="Copeland A."/>
            <person name="Lapidus A."/>
            <person name="Glavina del Rio T."/>
            <person name="Dalin E."/>
            <person name="Tice H."/>
            <person name="Bruce D."/>
            <person name="Goodwin L."/>
            <person name="Pitluck S."/>
            <person name="Schmutz J."/>
            <person name="Larimer F."/>
            <person name="Land M."/>
            <person name="Hauser L."/>
            <person name="Kyrpides N."/>
            <person name="Mikhailova N."/>
            <person name="Liu Z."/>
            <person name="Li T."/>
            <person name="Zhao F."/>
            <person name="Overmann J."/>
            <person name="Bryant D.A."/>
            <person name="Richardson P."/>
        </authorList>
    </citation>
    <scope>NUCLEOTIDE SEQUENCE [LARGE SCALE GENOMIC DNA]</scope>
    <source>
        <strain>ATCC 35110 / GB-78</strain>
    </source>
</reference>
<feature type="chain" id="PRO_1000092074" description="4-diphosphocytidyl-2-C-methyl-D-erythritol kinase">
    <location>
        <begin position="1"/>
        <end position="285"/>
    </location>
</feature>
<feature type="active site" evidence="1">
    <location>
        <position position="10"/>
    </location>
</feature>
<feature type="active site" evidence="1">
    <location>
        <position position="134"/>
    </location>
</feature>
<feature type="binding site" evidence="1">
    <location>
        <begin position="92"/>
        <end position="102"/>
    </location>
    <ligand>
        <name>ATP</name>
        <dbReference type="ChEBI" id="CHEBI:30616"/>
    </ligand>
</feature>
<sequence length="285" mass="31225">MSKTVNAYAKINLALFITGKLPNGYHTLETIFAPINWYDRLTFEPSETIEMACTNAELPTDDSNLCIKAAKRLQTESGSQKGVKISLEKNVPFGAGLGGGSSDAAATLNALNELWELSLPSETLHKLATELGADVPYFLEMPALALGTGIGEELTDLQVAFPFSIVTVFPETAISTAWAYQNFKQNFDRLLPDAATEIQIVCETGDLGRMQQFENDFESIVYENYAEVKKLRDDFVEAGSGFTRLSGSGSAVFGVFADDEKATACYEAMRKRYPTSLTPKSFKMK</sequence>
<name>ISPE_CHLT3</name>